<organism>
    <name type="scientific">Salmonella choleraesuis (strain SC-B67)</name>
    <dbReference type="NCBI Taxonomy" id="321314"/>
    <lineage>
        <taxon>Bacteria</taxon>
        <taxon>Pseudomonadati</taxon>
        <taxon>Pseudomonadota</taxon>
        <taxon>Gammaproteobacteria</taxon>
        <taxon>Enterobacterales</taxon>
        <taxon>Enterobacteriaceae</taxon>
        <taxon>Salmonella</taxon>
    </lineage>
</organism>
<name>NHAB_SALCH</name>
<evidence type="ECO:0000255" key="1">
    <source>
        <dbReference type="HAMAP-Rule" id="MF_01599"/>
    </source>
</evidence>
<gene>
    <name evidence="1" type="primary">nhaB</name>
    <name type="ordered locus">SCH_1799</name>
</gene>
<comment type="function">
    <text evidence="1">Na(+)/H(+) antiporter that extrudes sodium in exchange for external protons.</text>
</comment>
<comment type="catalytic activity">
    <reaction evidence="1">
        <text>2 Na(+)(in) + 3 H(+)(out) = 2 Na(+)(out) + 3 H(+)(in)</text>
        <dbReference type="Rhea" id="RHEA:29247"/>
        <dbReference type="ChEBI" id="CHEBI:15378"/>
        <dbReference type="ChEBI" id="CHEBI:29101"/>
    </reaction>
    <physiologicalReaction direction="left-to-right" evidence="1">
        <dbReference type="Rhea" id="RHEA:29248"/>
    </physiologicalReaction>
</comment>
<comment type="subcellular location">
    <subcellularLocation>
        <location evidence="1">Cell inner membrane</location>
        <topology evidence="1">Multi-pass membrane protein</topology>
    </subcellularLocation>
</comment>
<comment type="similarity">
    <text evidence="1">Belongs to the NhaB Na(+)/H(+) (TC 2.A.34) antiporter family.</text>
</comment>
<proteinExistence type="inferred from homology"/>
<reference key="1">
    <citation type="journal article" date="2005" name="Nucleic Acids Res.">
        <title>The genome sequence of Salmonella enterica serovar Choleraesuis, a highly invasive and resistant zoonotic pathogen.</title>
        <authorList>
            <person name="Chiu C.-H."/>
            <person name="Tang P."/>
            <person name="Chu C."/>
            <person name="Hu S."/>
            <person name="Bao Q."/>
            <person name="Yu J."/>
            <person name="Chou Y.-Y."/>
            <person name="Wang H.-S."/>
            <person name="Lee Y.-S."/>
        </authorList>
    </citation>
    <scope>NUCLEOTIDE SEQUENCE [LARGE SCALE GENOMIC DNA]</scope>
    <source>
        <strain>SC-B67</strain>
    </source>
</reference>
<accession>Q57NK6</accession>
<sequence length="514" mass="56526">MEISWGRAMWRNFLGQSPDWYKLALLVFLIVNPFIFLANPFIAGWLLVAEFIFTLAMALKCYPLLPGGLLAIEAVIIGMTSAAHVREEVAANLEVLLLLMFMVAGIYFMKQLLLFIFTRLLLSIRSKMVLSLAFCVAAAFLSAFLDALTVVAVVISVAVGFYGIYHRVASSRGEENDMLDDSHIDPHYKTVLEQFRGFLRSLMMHAGVGTALGGVMTMVGEPQNLIIAKAAGWHFGDFFLRMSPVTVPVLVCGLLTCMLVEKMRWFGYGETLPEKVRDVLQQFDDQSRKKRTRQDKIKLIVQAVIGVWLVTALALHLAEVGLIGLSVIILATALTGVTDEHAIGKAFTESLPFTALLTVFFSIVAVIIDQHLFAPIIQFVLQASEHAQLTLFYLFNGLLSSISDNVFVGTIYINEAKAAMENGAISLKQFELLAVAINTGTNLPSVATPNGQAAFLFLLTSALAPLIRLSYGRMVWMALPYTIVLTLIGLLCVEFTLAPATEWMTQAGWLATLS</sequence>
<feature type="chain" id="PRO_0000333117" description="Na(+)/H(+) antiporter NhaB">
    <location>
        <begin position="1"/>
        <end position="514"/>
    </location>
</feature>
<feature type="transmembrane region" description="Helical" evidence="1">
    <location>
        <begin position="23"/>
        <end position="43"/>
    </location>
</feature>
<feature type="transmembrane region" description="Helical" evidence="1">
    <location>
        <begin position="63"/>
        <end position="83"/>
    </location>
</feature>
<feature type="transmembrane region" description="Helical" evidence="1">
    <location>
        <begin position="97"/>
        <end position="117"/>
    </location>
</feature>
<feature type="transmembrane region" description="Helical" evidence="1">
    <location>
        <begin position="120"/>
        <end position="140"/>
    </location>
</feature>
<feature type="transmembrane region" description="Helical" evidence="1">
    <location>
        <begin position="144"/>
        <end position="164"/>
    </location>
</feature>
<feature type="transmembrane region" description="Helical" evidence="1">
    <location>
        <begin position="202"/>
        <end position="222"/>
    </location>
</feature>
<feature type="transmembrane region" description="Helical" evidence="1">
    <location>
        <begin position="238"/>
        <end position="258"/>
    </location>
</feature>
<feature type="transmembrane region" description="Helical" evidence="1">
    <location>
        <begin position="303"/>
        <end position="323"/>
    </location>
</feature>
<feature type="transmembrane region" description="Helical" evidence="1">
    <location>
        <begin position="357"/>
        <end position="377"/>
    </location>
</feature>
<feature type="transmembrane region" description="Helical" evidence="1">
    <location>
        <begin position="391"/>
        <end position="411"/>
    </location>
</feature>
<feature type="transmembrane region" description="Helical" evidence="1">
    <location>
        <begin position="447"/>
        <end position="467"/>
    </location>
</feature>
<feature type="transmembrane region" description="Helical" evidence="1">
    <location>
        <begin position="475"/>
        <end position="495"/>
    </location>
</feature>
<protein>
    <recommendedName>
        <fullName evidence="1">Na(+)/H(+) antiporter NhaB</fullName>
    </recommendedName>
    <alternativeName>
        <fullName evidence="1">Sodium/proton antiporter NhaB</fullName>
    </alternativeName>
</protein>
<keyword id="KW-0050">Antiport</keyword>
<keyword id="KW-0997">Cell inner membrane</keyword>
<keyword id="KW-1003">Cell membrane</keyword>
<keyword id="KW-0406">Ion transport</keyword>
<keyword id="KW-0472">Membrane</keyword>
<keyword id="KW-0915">Sodium</keyword>
<keyword id="KW-0739">Sodium transport</keyword>
<keyword id="KW-0812">Transmembrane</keyword>
<keyword id="KW-1133">Transmembrane helix</keyword>
<keyword id="KW-0813">Transport</keyword>
<dbReference type="EMBL" id="AE017220">
    <property type="protein sequence ID" value="AAX65705.1"/>
    <property type="molecule type" value="Genomic_DNA"/>
</dbReference>
<dbReference type="RefSeq" id="WP_000406438.1">
    <property type="nucleotide sequence ID" value="NC_006905.1"/>
</dbReference>
<dbReference type="SMR" id="Q57NK6"/>
<dbReference type="KEGG" id="sec:SCH_1799"/>
<dbReference type="HOGENOM" id="CLU_041110_0_0_6"/>
<dbReference type="Proteomes" id="UP000000538">
    <property type="component" value="Chromosome"/>
</dbReference>
<dbReference type="GO" id="GO:0005886">
    <property type="term" value="C:plasma membrane"/>
    <property type="evidence" value="ECO:0007669"/>
    <property type="project" value="UniProtKB-SubCell"/>
</dbReference>
<dbReference type="GO" id="GO:0015385">
    <property type="term" value="F:sodium:proton antiporter activity"/>
    <property type="evidence" value="ECO:0007669"/>
    <property type="project" value="InterPro"/>
</dbReference>
<dbReference type="HAMAP" id="MF_01599">
    <property type="entry name" value="NhaB"/>
    <property type="match status" value="1"/>
</dbReference>
<dbReference type="InterPro" id="IPR004671">
    <property type="entry name" value="Na+/H+_antiporter_NhaB"/>
</dbReference>
<dbReference type="NCBIfam" id="TIGR00774">
    <property type="entry name" value="NhaB"/>
    <property type="match status" value="1"/>
</dbReference>
<dbReference type="NCBIfam" id="NF007093">
    <property type="entry name" value="PRK09547.1"/>
    <property type="match status" value="1"/>
</dbReference>
<dbReference type="PANTHER" id="PTHR43302:SF1">
    <property type="entry name" value="NA(+)_H(+) ANTIPORTER NHAB"/>
    <property type="match status" value="1"/>
</dbReference>
<dbReference type="PANTHER" id="PTHR43302">
    <property type="entry name" value="TRANSPORTER ARSB-RELATED"/>
    <property type="match status" value="1"/>
</dbReference>
<dbReference type="Pfam" id="PF06450">
    <property type="entry name" value="NhaB"/>
    <property type="match status" value="1"/>
</dbReference>